<keyword id="KW-0963">Cytoplasm</keyword>
<keyword id="KW-0413">Isomerase</keyword>
<keyword id="KW-1185">Reference proteome</keyword>
<keyword id="KW-0697">Rotamase</keyword>
<sequence>MTSQAPPQPASSPGVAAPAAASSIPNLKDRLPKLEPRKRRSGPSNPTPIPETPALPTPPDTSSNWTFKTPSRRILSKKDHDIFLSSPTCKLVTAWVFGLAESIVDTPNSAIRDADLSALIKTILHILDETEQLVTKSPPNEQGGSRFGNKAFRGLLDLAQKNSAAWHHDIGVQNEDAINELSTYFCESFGNANRIDYGSGHELNFMIWLLCLYQLGLLKQSDFKPIVLRVFVRYLEVMRVIQMTYYLEPAGSHGVWGLDDYQFLPFLFGATQLLHHPYITPRAIHQDLTLEEFGHEYMYLGQVSFVNSTKTVKGLRWHSPMLDDISSARSWTKIDGGMRRMFVAEVLGKLPVMQHFLFGSLVPADDSMSEDTGAGDEADVEDDPHAGHDHTGKAHDGTGWGDCCGIKVPSSIAAAQEMKKRGMNQGLRRIPFD</sequence>
<gene>
    <name type="primary">RRD2</name>
    <name type="ORF">FGRRES_01092</name>
    <name type="ORF">FGSG_01092</name>
</gene>
<dbReference type="EC" id="5.2.1.8"/>
<dbReference type="EMBL" id="DS231663">
    <property type="protein sequence ID" value="ESU06369.1"/>
    <property type="molecule type" value="Genomic_DNA"/>
</dbReference>
<dbReference type="EMBL" id="HG970332">
    <property type="protein sequence ID" value="CEF73165.1"/>
    <property type="molecule type" value="Genomic_DNA"/>
</dbReference>
<dbReference type="RefSeq" id="XP_011316854.1">
    <property type="nucleotide sequence ID" value="XM_011318552.1"/>
</dbReference>
<dbReference type="SMR" id="Q4INW6"/>
<dbReference type="FunCoup" id="Q4INW6">
    <property type="interactions" value="548"/>
</dbReference>
<dbReference type="STRING" id="229533.Q4INW6"/>
<dbReference type="GeneID" id="23548544"/>
<dbReference type="KEGG" id="fgr:FGSG_01092"/>
<dbReference type="VEuPathDB" id="FungiDB:FGRAMPH1_01G02727"/>
<dbReference type="eggNOG" id="KOG2867">
    <property type="taxonomic scope" value="Eukaryota"/>
</dbReference>
<dbReference type="HOGENOM" id="CLU_030733_0_0_1"/>
<dbReference type="InParanoid" id="Q4INW6"/>
<dbReference type="OrthoDB" id="71736at110618"/>
<dbReference type="Proteomes" id="UP000070720">
    <property type="component" value="Chromosome 1"/>
</dbReference>
<dbReference type="GO" id="GO:0005737">
    <property type="term" value="C:cytoplasm"/>
    <property type="evidence" value="ECO:0007669"/>
    <property type="project" value="UniProtKB-SubCell"/>
</dbReference>
<dbReference type="GO" id="GO:0005634">
    <property type="term" value="C:nucleus"/>
    <property type="evidence" value="ECO:0007669"/>
    <property type="project" value="TreeGrafter"/>
</dbReference>
<dbReference type="GO" id="GO:0000159">
    <property type="term" value="C:protein phosphatase type 2A complex"/>
    <property type="evidence" value="ECO:0007669"/>
    <property type="project" value="TreeGrafter"/>
</dbReference>
<dbReference type="GO" id="GO:0003755">
    <property type="term" value="F:peptidyl-prolyl cis-trans isomerase activity"/>
    <property type="evidence" value="ECO:0007669"/>
    <property type="project" value="UniProtKB-KW"/>
</dbReference>
<dbReference type="GO" id="GO:0008160">
    <property type="term" value="F:protein tyrosine phosphatase activator activity"/>
    <property type="evidence" value="ECO:0007669"/>
    <property type="project" value="TreeGrafter"/>
</dbReference>
<dbReference type="GO" id="GO:0007052">
    <property type="term" value="P:mitotic spindle organization"/>
    <property type="evidence" value="ECO:0007669"/>
    <property type="project" value="TreeGrafter"/>
</dbReference>
<dbReference type="CDD" id="cd04087">
    <property type="entry name" value="PTPA"/>
    <property type="match status" value="1"/>
</dbReference>
<dbReference type="FunFam" id="1.20.120.1150:FF:000002">
    <property type="entry name" value="Serine/threonine-protein phosphatase 2A activator"/>
    <property type="match status" value="1"/>
</dbReference>
<dbReference type="Gene3D" id="1.20.120.1150">
    <property type="match status" value="1"/>
</dbReference>
<dbReference type="InterPro" id="IPR004327">
    <property type="entry name" value="Phstyr_phstse_ac"/>
</dbReference>
<dbReference type="InterPro" id="IPR043170">
    <property type="entry name" value="PTPA_C_lid"/>
</dbReference>
<dbReference type="InterPro" id="IPR037218">
    <property type="entry name" value="PTPA_sf"/>
</dbReference>
<dbReference type="PANTHER" id="PTHR10012">
    <property type="entry name" value="SERINE/THREONINE-PROTEIN PHOSPHATASE 2A REGULATORY SUBUNIT B"/>
    <property type="match status" value="1"/>
</dbReference>
<dbReference type="PANTHER" id="PTHR10012:SF5">
    <property type="entry name" value="SERINE_THREONINE-PROTEIN PHOSPHATASE 2A ACTIVATOR 2"/>
    <property type="match status" value="1"/>
</dbReference>
<dbReference type="Pfam" id="PF03095">
    <property type="entry name" value="PTPA"/>
    <property type="match status" value="1"/>
</dbReference>
<dbReference type="PIRSF" id="PIRSF016325">
    <property type="entry name" value="Phstyr_phstse_ac"/>
    <property type="match status" value="1"/>
</dbReference>
<dbReference type="SUPFAM" id="SSF140984">
    <property type="entry name" value="PTPA-like"/>
    <property type="match status" value="1"/>
</dbReference>
<feature type="chain" id="PRO_0000226114" description="Serine/threonine-protein phosphatase 2A activator 2">
    <location>
        <begin position="1"/>
        <end position="433"/>
    </location>
</feature>
<feature type="region of interest" description="Disordered" evidence="2">
    <location>
        <begin position="1"/>
        <end position="67"/>
    </location>
</feature>
<feature type="region of interest" description="Disordered" evidence="2">
    <location>
        <begin position="367"/>
        <end position="400"/>
    </location>
</feature>
<feature type="compositionally biased region" description="Pro residues" evidence="2">
    <location>
        <begin position="1"/>
        <end position="10"/>
    </location>
</feature>
<feature type="compositionally biased region" description="Low complexity" evidence="2">
    <location>
        <begin position="11"/>
        <end position="23"/>
    </location>
</feature>
<feature type="compositionally biased region" description="Pro residues" evidence="2">
    <location>
        <begin position="45"/>
        <end position="59"/>
    </location>
</feature>
<feature type="compositionally biased region" description="Acidic residues" evidence="2">
    <location>
        <begin position="367"/>
        <end position="382"/>
    </location>
</feature>
<feature type="compositionally biased region" description="Basic and acidic residues" evidence="2">
    <location>
        <begin position="383"/>
        <end position="396"/>
    </location>
</feature>
<organism>
    <name type="scientific">Gibberella zeae (strain ATCC MYA-4620 / CBS 123657 / FGSC 9075 / NRRL 31084 / PH-1)</name>
    <name type="common">Wheat head blight fungus</name>
    <name type="synonym">Fusarium graminearum</name>
    <dbReference type="NCBI Taxonomy" id="229533"/>
    <lineage>
        <taxon>Eukaryota</taxon>
        <taxon>Fungi</taxon>
        <taxon>Dikarya</taxon>
        <taxon>Ascomycota</taxon>
        <taxon>Pezizomycotina</taxon>
        <taxon>Sordariomycetes</taxon>
        <taxon>Hypocreomycetidae</taxon>
        <taxon>Hypocreales</taxon>
        <taxon>Nectriaceae</taxon>
        <taxon>Fusarium</taxon>
    </lineage>
</organism>
<comment type="function">
    <text evidence="1">PPIases accelerate the folding of proteins. It catalyzes the cis-trans isomerization of proline imidic peptide bonds in oligopeptides. Acts as a regulatory subunit for PP2A-like phosphatases modulating their activity or substrate specificity, probably by inducing a conformational change in the catalytic subunit, a direct target of the PPIase. Can reactivate inactive phosphatase PP2A-phosphatase methylesterase complexes (PP2Ai) in presence of ATP and Mg(2+) by dissociating the inactive form from the complex (By similarity).</text>
</comment>
<comment type="catalytic activity">
    <reaction>
        <text>[protein]-peptidylproline (omega=180) = [protein]-peptidylproline (omega=0)</text>
        <dbReference type="Rhea" id="RHEA:16237"/>
        <dbReference type="Rhea" id="RHEA-COMP:10747"/>
        <dbReference type="Rhea" id="RHEA-COMP:10748"/>
        <dbReference type="ChEBI" id="CHEBI:83833"/>
        <dbReference type="ChEBI" id="CHEBI:83834"/>
        <dbReference type="EC" id="5.2.1.8"/>
    </reaction>
</comment>
<comment type="subcellular location">
    <subcellularLocation>
        <location evidence="1">Cytoplasm</location>
    </subcellularLocation>
</comment>
<comment type="similarity">
    <text evidence="3">Belongs to the PTPA-type PPIase family.</text>
</comment>
<proteinExistence type="inferred from homology"/>
<name>PTPA2_GIBZE</name>
<accession>Q4INW6</accession>
<accession>A0A0E0RPJ0</accession>
<accession>I1RBZ4</accession>
<accession>V6QWN8</accession>
<protein>
    <recommendedName>
        <fullName>Serine/threonine-protein phosphatase 2A activator 2</fullName>
        <ecNumber>5.2.1.8</ecNumber>
    </recommendedName>
    <alternativeName>
        <fullName>Peptidyl-prolyl cis-trans isomerase PTPA-2</fullName>
        <shortName>PPIase PTPA-2</shortName>
        <shortName>Rotamase PTPA-2</shortName>
    </alternativeName>
    <alternativeName>
        <fullName>Phosphotyrosyl phosphatase activator 2</fullName>
    </alternativeName>
</protein>
<evidence type="ECO:0000250" key="1"/>
<evidence type="ECO:0000256" key="2">
    <source>
        <dbReference type="SAM" id="MobiDB-lite"/>
    </source>
</evidence>
<evidence type="ECO:0000305" key="3"/>
<reference key="1">
    <citation type="journal article" date="2007" name="Science">
        <title>The Fusarium graminearum genome reveals a link between localized polymorphism and pathogen specialization.</title>
        <authorList>
            <person name="Cuomo C.A."/>
            <person name="Gueldener U."/>
            <person name="Xu J.-R."/>
            <person name="Trail F."/>
            <person name="Turgeon B.G."/>
            <person name="Di Pietro A."/>
            <person name="Walton J.D."/>
            <person name="Ma L.-J."/>
            <person name="Baker S.E."/>
            <person name="Rep M."/>
            <person name="Adam G."/>
            <person name="Antoniw J."/>
            <person name="Baldwin T."/>
            <person name="Calvo S.E."/>
            <person name="Chang Y.-L."/>
            <person name="DeCaprio D."/>
            <person name="Gale L.R."/>
            <person name="Gnerre S."/>
            <person name="Goswami R.S."/>
            <person name="Hammond-Kosack K."/>
            <person name="Harris L.J."/>
            <person name="Hilburn K."/>
            <person name="Kennell J.C."/>
            <person name="Kroken S."/>
            <person name="Magnuson J.K."/>
            <person name="Mannhaupt G."/>
            <person name="Mauceli E.W."/>
            <person name="Mewes H.-W."/>
            <person name="Mitterbauer R."/>
            <person name="Muehlbauer G."/>
            <person name="Muensterkoetter M."/>
            <person name="Nelson D."/>
            <person name="O'Donnell K."/>
            <person name="Ouellet T."/>
            <person name="Qi W."/>
            <person name="Quesneville H."/>
            <person name="Roncero M.I.G."/>
            <person name="Seong K.-Y."/>
            <person name="Tetko I.V."/>
            <person name="Urban M."/>
            <person name="Waalwijk C."/>
            <person name="Ward T.J."/>
            <person name="Yao J."/>
            <person name="Birren B.W."/>
            <person name="Kistler H.C."/>
        </authorList>
    </citation>
    <scope>NUCLEOTIDE SEQUENCE [LARGE SCALE GENOMIC DNA]</scope>
    <source>
        <strain>ATCC MYA-4620 / CBS 123657 / FGSC 9075 / NRRL 31084 / PH-1</strain>
    </source>
</reference>
<reference key="2">
    <citation type="journal article" date="2010" name="Nature">
        <title>Comparative genomics reveals mobile pathogenicity chromosomes in Fusarium.</title>
        <authorList>
            <person name="Ma L.-J."/>
            <person name="van der Does H.C."/>
            <person name="Borkovich K.A."/>
            <person name="Coleman J.J."/>
            <person name="Daboussi M.-J."/>
            <person name="Di Pietro A."/>
            <person name="Dufresne M."/>
            <person name="Freitag M."/>
            <person name="Grabherr M."/>
            <person name="Henrissat B."/>
            <person name="Houterman P.M."/>
            <person name="Kang S."/>
            <person name="Shim W.-B."/>
            <person name="Woloshuk C."/>
            <person name="Xie X."/>
            <person name="Xu J.-R."/>
            <person name="Antoniw J."/>
            <person name="Baker S.E."/>
            <person name="Bluhm B.H."/>
            <person name="Breakspear A."/>
            <person name="Brown D.W."/>
            <person name="Butchko R.A.E."/>
            <person name="Chapman S."/>
            <person name="Coulson R."/>
            <person name="Coutinho P.M."/>
            <person name="Danchin E.G.J."/>
            <person name="Diener A."/>
            <person name="Gale L.R."/>
            <person name="Gardiner D.M."/>
            <person name="Goff S."/>
            <person name="Hammond-Kosack K.E."/>
            <person name="Hilburn K."/>
            <person name="Hua-Van A."/>
            <person name="Jonkers W."/>
            <person name="Kazan K."/>
            <person name="Kodira C.D."/>
            <person name="Koehrsen M."/>
            <person name="Kumar L."/>
            <person name="Lee Y.-H."/>
            <person name="Li L."/>
            <person name="Manners J.M."/>
            <person name="Miranda-Saavedra D."/>
            <person name="Mukherjee M."/>
            <person name="Park G."/>
            <person name="Park J."/>
            <person name="Park S.-Y."/>
            <person name="Proctor R.H."/>
            <person name="Regev A."/>
            <person name="Ruiz-Roldan M.C."/>
            <person name="Sain D."/>
            <person name="Sakthikumar S."/>
            <person name="Sykes S."/>
            <person name="Schwartz D.C."/>
            <person name="Turgeon B.G."/>
            <person name="Wapinski I."/>
            <person name="Yoder O."/>
            <person name="Young S."/>
            <person name="Zeng Q."/>
            <person name="Zhou S."/>
            <person name="Galagan J."/>
            <person name="Cuomo C.A."/>
            <person name="Kistler H.C."/>
            <person name="Rep M."/>
        </authorList>
    </citation>
    <scope>GENOME REANNOTATION</scope>
    <source>
        <strain>ATCC MYA-4620 / CBS 123657 / FGSC 9075 / NRRL 31084 / PH-1</strain>
    </source>
</reference>
<reference key="3">
    <citation type="journal article" date="2015" name="BMC Genomics">
        <title>The completed genome sequence of the pathogenic ascomycete fungus Fusarium graminearum.</title>
        <authorList>
            <person name="King R."/>
            <person name="Urban M."/>
            <person name="Hammond-Kosack M.C.U."/>
            <person name="Hassani-Pak K."/>
            <person name="Hammond-Kosack K.E."/>
        </authorList>
    </citation>
    <scope>NUCLEOTIDE SEQUENCE [LARGE SCALE GENOMIC DNA]</scope>
    <source>
        <strain>ATCC MYA-4620 / CBS 123657 / FGSC 9075 / NRRL 31084 / PH-1</strain>
    </source>
</reference>